<protein>
    <recommendedName>
        <fullName evidence="1">ATP synthase subunit delta</fullName>
    </recommendedName>
    <alternativeName>
        <fullName evidence="1">ATP synthase F(1) sector subunit delta</fullName>
    </alternativeName>
    <alternativeName>
        <fullName evidence="1">F-type ATPase subunit delta</fullName>
        <shortName evidence="1">F-ATPase subunit delta</shortName>
    </alternativeName>
</protein>
<accession>Q3ANW3</accession>
<keyword id="KW-0066">ATP synthesis</keyword>
<keyword id="KW-0997">Cell inner membrane</keyword>
<keyword id="KW-1003">Cell membrane</keyword>
<keyword id="KW-0139">CF(1)</keyword>
<keyword id="KW-0375">Hydrogen ion transport</keyword>
<keyword id="KW-0406">Ion transport</keyword>
<keyword id="KW-0472">Membrane</keyword>
<keyword id="KW-0813">Transport</keyword>
<feature type="chain" id="PRO_0000370936" description="ATP synthase subunit delta">
    <location>
        <begin position="1"/>
        <end position="179"/>
    </location>
</feature>
<dbReference type="EMBL" id="CP000108">
    <property type="protein sequence ID" value="ABB27346.1"/>
    <property type="molecule type" value="Genomic_DNA"/>
</dbReference>
<dbReference type="SMR" id="Q3ANW3"/>
<dbReference type="STRING" id="340177.Cag_0067"/>
<dbReference type="KEGG" id="cch:Cag_0067"/>
<dbReference type="eggNOG" id="COG0712">
    <property type="taxonomic scope" value="Bacteria"/>
</dbReference>
<dbReference type="HOGENOM" id="CLU_085114_4_0_10"/>
<dbReference type="OrthoDB" id="9802471at2"/>
<dbReference type="GO" id="GO:0005886">
    <property type="term" value="C:plasma membrane"/>
    <property type="evidence" value="ECO:0007669"/>
    <property type="project" value="UniProtKB-SubCell"/>
</dbReference>
<dbReference type="GO" id="GO:0045259">
    <property type="term" value="C:proton-transporting ATP synthase complex"/>
    <property type="evidence" value="ECO:0007669"/>
    <property type="project" value="UniProtKB-KW"/>
</dbReference>
<dbReference type="GO" id="GO:0046933">
    <property type="term" value="F:proton-transporting ATP synthase activity, rotational mechanism"/>
    <property type="evidence" value="ECO:0007669"/>
    <property type="project" value="UniProtKB-UniRule"/>
</dbReference>
<dbReference type="Gene3D" id="1.10.520.20">
    <property type="entry name" value="N-terminal domain of the delta subunit of the F1F0-ATP synthase"/>
    <property type="match status" value="1"/>
</dbReference>
<dbReference type="HAMAP" id="MF_01416">
    <property type="entry name" value="ATP_synth_delta_bact"/>
    <property type="match status" value="1"/>
</dbReference>
<dbReference type="InterPro" id="IPR026015">
    <property type="entry name" value="ATP_synth_OSCP/delta_N_sf"/>
</dbReference>
<dbReference type="InterPro" id="IPR000711">
    <property type="entry name" value="ATPase_OSCP/dsu"/>
</dbReference>
<dbReference type="NCBIfam" id="TIGR01145">
    <property type="entry name" value="ATP_synt_delta"/>
    <property type="match status" value="1"/>
</dbReference>
<dbReference type="PANTHER" id="PTHR11910">
    <property type="entry name" value="ATP SYNTHASE DELTA CHAIN"/>
    <property type="match status" value="1"/>
</dbReference>
<dbReference type="Pfam" id="PF00213">
    <property type="entry name" value="OSCP"/>
    <property type="match status" value="1"/>
</dbReference>
<dbReference type="PRINTS" id="PR00125">
    <property type="entry name" value="ATPASEDELTA"/>
</dbReference>
<dbReference type="SUPFAM" id="SSF47928">
    <property type="entry name" value="N-terminal domain of the delta subunit of the F1F0-ATP synthase"/>
    <property type="match status" value="1"/>
</dbReference>
<reference key="1">
    <citation type="submission" date="2005-08" db="EMBL/GenBank/DDBJ databases">
        <title>Complete sequence of Chlorobium chlorochromatii CaD3.</title>
        <authorList>
            <consortium name="US DOE Joint Genome Institute"/>
            <person name="Copeland A."/>
            <person name="Lucas S."/>
            <person name="Lapidus A."/>
            <person name="Barry K."/>
            <person name="Detter J.C."/>
            <person name="Glavina T."/>
            <person name="Hammon N."/>
            <person name="Israni S."/>
            <person name="Pitluck S."/>
            <person name="Bryant D."/>
            <person name="Schmutz J."/>
            <person name="Larimer F."/>
            <person name="Land M."/>
            <person name="Kyrpides N."/>
            <person name="Ivanova N."/>
            <person name="Richardson P."/>
        </authorList>
    </citation>
    <scope>NUCLEOTIDE SEQUENCE [LARGE SCALE GENOMIC DNA]</scope>
    <source>
        <strain>CaD3</strain>
    </source>
</reference>
<gene>
    <name evidence="1" type="primary">atpH</name>
    <name type="ordered locus">Cag_0067</name>
</gene>
<evidence type="ECO:0000255" key="1">
    <source>
        <dbReference type="HAMAP-Rule" id="MF_01416"/>
    </source>
</evidence>
<proteinExistence type="inferred from homology"/>
<sequence length="179" mass="19737">MSVVIASRRYANALLSVVEESNTIDKTLDEMNAISEVLHHSRDLVHALKSPLISYDKKIHIVEEVFKGRVSETVMFFLKLVGKKNRLGHLPHIVDEFKNLLDEDRGIINVDITSAVELSDEQANELVATIANMSGKQVRATLTVNEELIAGAAVKIADTIIDGTVRHQLSKLRSSLVAA</sequence>
<organism>
    <name type="scientific">Chlorobium chlorochromatii (strain CaD3)</name>
    <dbReference type="NCBI Taxonomy" id="340177"/>
    <lineage>
        <taxon>Bacteria</taxon>
        <taxon>Pseudomonadati</taxon>
        <taxon>Chlorobiota</taxon>
        <taxon>Chlorobiia</taxon>
        <taxon>Chlorobiales</taxon>
        <taxon>Chlorobiaceae</taxon>
        <taxon>Chlorobium/Pelodictyon group</taxon>
        <taxon>Chlorobium</taxon>
    </lineage>
</organism>
<comment type="function">
    <text evidence="1">F(1)F(0) ATP synthase produces ATP from ADP in the presence of a proton or sodium gradient. F-type ATPases consist of two structural domains, F(1) containing the extramembraneous catalytic core and F(0) containing the membrane proton channel, linked together by a central stalk and a peripheral stalk. During catalysis, ATP synthesis in the catalytic domain of F(1) is coupled via a rotary mechanism of the central stalk subunits to proton translocation.</text>
</comment>
<comment type="function">
    <text evidence="1">This protein is part of the stalk that links CF(0) to CF(1). It either transmits conformational changes from CF(0) to CF(1) or is implicated in proton conduction.</text>
</comment>
<comment type="subunit">
    <text evidence="1">F-type ATPases have 2 components, F(1) - the catalytic core - and F(0) - the membrane proton channel. F(1) has five subunits: alpha(3), beta(3), gamma(1), delta(1), epsilon(1). F(0) has three main subunits: a(1), b(2) and c(10-14). The alpha and beta chains form an alternating ring which encloses part of the gamma chain. F(1) is attached to F(0) by a central stalk formed by the gamma and epsilon chains, while a peripheral stalk is formed by the delta and b chains.</text>
</comment>
<comment type="subcellular location">
    <subcellularLocation>
        <location evidence="1">Cell inner membrane</location>
        <topology evidence="1">Peripheral membrane protein</topology>
    </subcellularLocation>
</comment>
<comment type="similarity">
    <text evidence="1">Belongs to the ATPase delta chain family.</text>
</comment>
<name>ATPD_CHLCH</name>